<feature type="chain" id="PRO_1000006261" description="Serine hydroxymethyltransferase">
    <location>
        <begin position="1"/>
        <end position="416"/>
    </location>
</feature>
<feature type="binding site" evidence="1">
    <location>
        <position position="121"/>
    </location>
    <ligand>
        <name>(6S)-5,6,7,8-tetrahydrofolate</name>
        <dbReference type="ChEBI" id="CHEBI:57453"/>
    </ligand>
</feature>
<feature type="binding site" evidence="1">
    <location>
        <begin position="125"/>
        <end position="127"/>
    </location>
    <ligand>
        <name>(6S)-5,6,7,8-tetrahydrofolate</name>
        <dbReference type="ChEBI" id="CHEBI:57453"/>
    </ligand>
</feature>
<feature type="binding site" evidence="1">
    <location>
        <begin position="354"/>
        <end position="356"/>
    </location>
    <ligand>
        <name>(6S)-5,6,7,8-tetrahydrofolate</name>
        <dbReference type="ChEBI" id="CHEBI:57453"/>
    </ligand>
</feature>
<feature type="site" description="Plays an important role in substrate specificity" evidence="1">
    <location>
        <position position="228"/>
    </location>
</feature>
<feature type="modified residue" description="N6-(pyridoxal phosphate)lysine" evidence="1">
    <location>
        <position position="229"/>
    </location>
</feature>
<comment type="function">
    <text evidence="1">Catalyzes the reversible interconversion of serine and glycine with tetrahydrofolate (THF) serving as the one-carbon carrier. This reaction serves as the major source of one-carbon groups required for the biosynthesis of purines, thymidylate, methionine, and other important biomolecules. Also exhibits THF-independent aldolase activity toward beta-hydroxyamino acids, producing glycine and aldehydes, via a retro-aldol mechanism.</text>
</comment>
<comment type="catalytic activity">
    <reaction evidence="1">
        <text>(6R)-5,10-methylene-5,6,7,8-tetrahydrofolate + glycine + H2O = (6S)-5,6,7,8-tetrahydrofolate + L-serine</text>
        <dbReference type="Rhea" id="RHEA:15481"/>
        <dbReference type="ChEBI" id="CHEBI:15377"/>
        <dbReference type="ChEBI" id="CHEBI:15636"/>
        <dbReference type="ChEBI" id="CHEBI:33384"/>
        <dbReference type="ChEBI" id="CHEBI:57305"/>
        <dbReference type="ChEBI" id="CHEBI:57453"/>
        <dbReference type="EC" id="2.1.2.1"/>
    </reaction>
</comment>
<comment type="cofactor">
    <cofactor evidence="1">
        <name>pyridoxal 5'-phosphate</name>
        <dbReference type="ChEBI" id="CHEBI:597326"/>
    </cofactor>
</comment>
<comment type="pathway">
    <text evidence="1">One-carbon metabolism; tetrahydrofolate interconversion.</text>
</comment>
<comment type="pathway">
    <text evidence="1">Amino-acid biosynthesis; glycine biosynthesis; glycine from L-serine: step 1/1.</text>
</comment>
<comment type="subunit">
    <text evidence="1">Homodimer.</text>
</comment>
<comment type="subcellular location">
    <subcellularLocation>
        <location evidence="1">Cytoplasm</location>
    </subcellularLocation>
</comment>
<comment type="similarity">
    <text evidence="1">Belongs to the SHMT family.</text>
</comment>
<reference key="1">
    <citation type="submission" date="2006-12" db="EMBL/GenBank/DDBJ databases">
        <title>Complete sequence of Halorhodospira halophila SL1.</title>
        <authorList>
            <consortium name="US DOE Joint Genome Institute"/>
            <person name="Copeland A."/>
            <person name="Lucas S."/>
            <person name="Lapidus A."/>
            <person name="Barry K."/>
            <person name="Detter J.C."/>
            <person name="Glavina del Rio T."/>
            <person name="Hammon N."/>
            <person name="Israni S."/>
            <person name="Dalin E."/>
            <person name="Tice H."/>
            <person name="Pitluck S."/>
            <person name="Saunders E."/>
            <person name="Brettin T."/>
            <person name="Bruce D."/>
            <person name="Han C."/>
            <person name="Tapia R."/>
            <person name="Schmutz J."/>
            <person name="Larimer F."/>
            <person name="Land M."/>
            <person name="Hauser L."/>
            <person name="Kyrpides N."/>
            <person name="Mikhailova N."/>
            <person name="Hoff W."/>
            <person name="Richardson P."/>
        </authorList>
    </citation>
    <scope>NUCLEOTIDE SEQUENCE [LARGE SCALE GENOMIC DNA]</scope>
    <source>
        <strain>DSM 244 / SL1</strain>
    </source>
</reference>
<name>GLYA_HALHL</name>
<organism>
    <name type="scientific">Halorhodospira halophila (strain DSM 244 / SL1)</name>
    <name type="common">Ectothiorhodospira halophila (strain DSM 244 / SL1)</name>
    <dbReference type="NCBI Taxonomy" id="349124"/>
    <lineage>
        <taxon>Bacteria</taxon>
        <taxon>Pseudomonadati</taxon>
        <taxon>Pseudomonadota</taxon>
        <taxon>Gammaproteobacteria</taxon>
        <taxon>Chromatiales</taxon>
        <taxon>Ectothiorhodospiraceae</taxon>
        <taxon>Halorhodospira</taxon>
    </lineage>
</organism>
<dbReference type="EC" id="2.1.2.1" evidence="1"/>
<dbReference type="EMBL" id="CP000544">
    <property type="protein sequence ID" value="ABM61678.1"/>
    <property type="molecule type" value="Genomic_DNA"/>
</dbReference>
<dbReference type="RefSeq" id="WP_011813701.1">
    <property type="nucleotide sequence ID" value="NC_008789.1"/>
</dbReference>
<dbReference type="SMR" id="A1WVG6"/>
<dbReference type="STRING" id="349124.Hhal_0902"/>
<dbReference type="KEGG" id="hha:Hhal_0902"/>
<dbReference type="eggNOG" id="COG0112">
    <property type="taxonomic scope" value="Bacteria"/>
</dbReference>
<dbReference type="HOGENOM" id="CLU_022477_2_1_6"/>
<dbReference type="OrthoDB" id="9803846at2"/>
<dbReference type="UniPathway" id="UPA00193"/>
<dbReference type="UniPathway" id="UPA00288">
    <property type="reaction ID" value="UER01023"/>
</dbReference>
<dbReference type="Proteomes" id="UP000000647">
    <property type="component" value="Chromosome"/>
</dbReference>
<dbReference type="GO" id="GO:0005829">
    <property type="term" value="C:cytosol"/>
    <property type="evidence" value="ECO:0007669"/>
    <property type="project" value="TreeGrafter"/>
</dbReference>
<dbReference type="GO" id="GO:0004372">
    <property type="term" value="F:glycine hydroxymethyltransferase activity"/>
    <property type="evidence" value="ECO:0007669"/>
    <property type="project" value="UniProtKB-UniRule"/>
</dbReference>
<dbReference type="GO" id="GO:0030170">
    <property type="term" value="F:pyridoxal phosphate binding"/>
    <property type="evidence" value="ECO:0007669"/>
    <property type="project" value="UniProtKB-UniRule"/>
</dbReference>
<dbReference type="GO" id="GO:0019264">
    <property type="term" value="P:glycine biosynthetic process from serine"/>
    <property type="evidence" value="ECO:0007669"/>
    <property type="project" value="UniProtKB-UniRule"/>
</dbReference>
<dbReference type="GO" id="GO:0035999">
    <property type="term" value="P:tetrahydrofolate interconversion"/>
    <property type="evidence" value="ECO:0007669"/>
    <property type="project" value="UniProtKB-UniRule"/>
</dbReference>
<dbReference type="CDD" id="cd00378">
    <property type="entry name" value="SHMT"/>
    <property type="match status" value="1"/>
</dbReference>
<dbReference type="FunFam" id="3.40.640.10:FF:000001">
    <property type="entry name" value="Serine hydroxymethyltransferase"/>
    <property type="match status" value="1"/>
</dbReference>
<dbReference type="FunFam" id="3.90.1150.10:FF:000003">
    <property type="entry name" value="Serine hydroxymethyltransferase"/>
    <property type="match status" value="1"/>
</dbReference>
<dbReference type="Gene3D" id="3.90.1150.10">
    <property type="entry name" value="Aspartate Aminotransferase, domain 1"/>
    <property type="match status" value="1"/>
</dbReference>
<dbReference type="Gene3D" id="3.40.640.10">
    <property type="entry name" value="Type I PLP-dependent aspartate aminotransferase-like (Major domain)"/>
    <property type="match status" value="1"/>
</dbReference>
<dbReference type="HAMAP" id="MF_00051">
    <property type="entry name" value="SHMT"/>
    <property type="match status" value="1"/>
</dbReference>
<dbReference type="InterPro" id="IPR015424">
    <property type="entry name" value="PyrdxlP-dep_Trfase"/>
</dbReference>
<dbReference type="InterPro" id="IPR015421">
    <property type="entry name" value="PyrdxlP-dep_Trfase_major"/>
</dbReference>
<dbReference type="InterPro" id="IPR015422">
    <property type="entry name" value="PyrdxlP-dep_Trfase_small"/>
</dbReference>
<dbReference type="InterPro" id="IPR001085">
    <property type="entry name" value="Ser_HO-MeTrfase"/>
</dbReference>
<dbReference type="InterPro" id="IPR049943">
    <property type="entry name" value="Ser_HO-MeTrfase-like"/>
</dbReference>
<dbReference type="InterPro" id="IPR019798">
    <property type="entry name" value="Ser_HO-MeTrfase_PLP_BS"/>
</dbReference>
<dbReference type="InterPro" id="IPR039429">
    <property type="entry name" value="SHMT-like_dom"/>
</dbReference>
<dbReference type="NCBIfam" id="NF000586">
    <property type="entry name" value="PRK00011.1"/>
    <property type="match status" value="1"/>
</dbReference>
<dbReference type="PANTHER" id="PTHR11680">
    <property type="entry name" value="SERINE HYDROXYMETHYLTRANSFERASE"/>
    <property type="match status" value="1"/>
</dbReference>
<dbReference type="PANTHER" id="PTHR11680:SF50">
    <property type="entry name" value="SERINE HYDROXYMETHYLTRANSFERASE"/>
    <property type="match status" value="1"/>
</dbReference>
<dbReference type="Pfam" id="PF00464">
    <property type="entry name" value="SHMT"/>
    <property type="match status" value="1"/>
</dbReference>
<dbReference type="PIRSF" id="PIRSF000412">
    <property type="entry name" value="SHMT"/>
    <property type="match status" value="1"/>
</dbReference>
<dbReference type="SUPFAM" id="SSF53383">
    <property type="entry name" value="PLP-dependent transferases"/>
    <property type="match status" value="1"/>
</dbReference>
<dbReference type="PROSITE" id="PS00096">
    <property type="entry name" value="SHMT"/>
    <property type="match status" value="1"/>
</dbReference>
<evidence type="ECO:0000255" key="1">
    <source>
        <dbReference type="HAMAP-Rule" id="MF_00051"/>
    </source>
</evidence>
<proteinExistence type="inferred from homology"/>
<sequence length="416" mass="45196">MFSRDMTIAGYDPELAAAIEDERQRQEDHIELIASENYASPRVMEAQGSVLTNKYAEGYPGKRYYGGCEHVDVAEQLAIDRAKQLFGADYANVQPHSGSQANAAVFHALLKPGDTILGMSLDHGGHLTHGAKVNFSGKLFNAVQYGINDDGQIDYDEIQRLATEHQPKMVIGGFSAYSQVVDWARLRQIADSVGAYLVVDMAHIAGLVAAGVYPSPIPHADAVTSTTHKTLRGPRGGIILARSNPDLEKKFQSLVFPGTQGGPLMHAIAGKAVAFKEALEPDFKQYQEQVVANARAMARRVIERGYNVVSGGTDNHLFLMDLTPKNLTGKDADAALGRANITVNKNTVPNDPQSPFVTSGLRIGTPAITTRGFKEAEATRLADWICDVLDNMGDESVVERVRGEVEQICREFPVYG</sequence>
<accession>A1WVG6</accession>
<protein>
    <recommendedName>
        <fullName evidence="1">Serine hydroxymethyltransferase</fullName>
        <shortName evidence="1">SHMT</shortName>
        <shortName evidence="1">Serine methylase</shortName>
        <ecNumber evidence="1">2.1.2.1</ecNumber>
    </recommendedName>
</protein>
<gene>
    <name evidence="1" type="primary">glyA</name>
    <name type="ordered locus">Hhal_0902</name>
</gene>
<keyword id="KW-0028">Amino-acid biosynthesis</keyword>
<keyword id="KW-0963">Cytoplasm</keyword>
<keyword id="KW-0554">One-carbon metabolism</keyword>
<keyword id="KW-0663">Pyridoxal phosphate</keyword>
<keyword id="KW-1185">Reference proteome</keyword>
<keyword id="KW-0808">Transferase</keyword>